<keyword id="KW-0066">ATP synthesis</keyword>
<keyword id="KW-0997">Cell inner membrane</keyword>
<keyword id="KW-1003">Cell membrane</keyword>
<keyword id="KW-0138">CF(0)</keyword>
<keyword id="KW-0375">Hydrogen ion transport</keyword>
<keyword id="KW-0406">Ion transport</keyword>
<keyword id="KW-0472">Membrane</keyword>
<keyword id="KW-1185">Reference proteome</keyword>
<keyword id="KW-0812">Transmembrane</keyword>
<keyword id="KW-1133">Transmembrane helix</keyword>
<keyword id="KW-0813">Transport</keyword>
<accession>A6Q3A6</accession>
<proteinExistence type="inferred from homology"/>
<gene>
    <name evidence="1" type="primary">atpB</name>
    <name type="ordered locus">NIS_0853</name>
</gene>
<sequence length="226" mass="25283">MEGIFTFFGVISENHTFLFVSHMFLAALLTLIVAKLATKRLQVVPTGCQNVMEAYLEGVVAMGRDVIGESYAKKYLPLVATLGLFIFFANLMEIIPGFEPPSGNINFTLALALIVFIYYNFEGIRKNGVIHYFAHFAGPVKLLAPLMFPIEIVSHISRIISLSFRLFGNIKGDDLFVWVLLMLAPWIVPLPGFALMTFSAFLQTFIFMILTYVYLAGAVLLHEESL</sequence>
<evidence type="ECO:0000255" key="1">
    <source>
        <dbReference type="HAMAP-Rule" id="MF_01393"/>
    </source>
</evidence>
<protein>
    <recommendedName>
        <fullName evidence="1">ATP synthase subunit a</fullName>
    </recommendedName>
    <alternativeName>
        <fullName evidence="1">ATP synthase F0 sector subunit a</fullName>
    </alternativeName>
    <alternativeName>
        <fullName evidence="1">F-ATPase subunit 6</fullName>
    </alternativeName>
</protein>
<comment type="function">
    <text evidence="1">Key component of the proton channel; it plays a direct role in the translocation of protons across the membrane.</text>
</comment>
<comment type="subunit">
    <text evidence="1">F-type ATPases have 2 components, CF(1) - the catalytic core - and CF(0) - the membrane proton channel. CF(1) has five subunits: alpha(3), beta(3), gamma(1), delta(1), epsilon(1). CF(0) has three main subunits: a(1), b(2) and c(9-12). The alpha and beta chains form an alternating ring which encloses part of the gamma chain. CF(1) is attached to CF(0) by a central stalk formed by the gamma and epsilon chains, while a peripheral stalk is formed by the delta and b chains.</text>
</comment>
<comment type="subcellular location">
    <subcellularLocation>
        <location evidence="1">Cell inner membrane</location>
        <topology evidence="1">Multi-pass membrane protein</topology>
    </subcellularLocation>
</comment>
<comment type="similarity">
    <text evidence="1">Belongs to the ATPase A chain family.</text>
</comment>
<name>ATP6_NITSB</name>
<reference key="1">
    <citation type="journal article" date="2007" name="Proc. Natl. Acad. Sci. U.S.A.">
        <title>Deep-sea vent epsilon-proteobacterial genomes provide insights into emergence of pathogens.</title>
        <authorList>
            <person name="Nakagawa S."/>
            <person name="Takaki Y."/>
            <person name="Shimamura S."/>
            <person name="Reysenbach A.-L."/>
            <person name="Takai K."/>
            <person name="Horikoshi K."/>
        </authorList>
    </citation>
    <scope>NUCLEOTIDE SEQUENCE [LARGE SCALE GENOMIC DNA]</scope>
    <source>
        <strain>SB155-2</strain>
    </source>
</reference>
<feature type="chain" id="PRO_0000362353" description="ATP synthase subunit a">
    <location>
        <begin position="1"/>
        <end position="226"/>
    </location>
</feature>
<feature type="transmembrane region" description="Helical" evidence="1">
    <location>
        <begin position="17"/>
        <end position="37"/>
    </location>
</feature>
<feature type="transmembrane region" description="Helical" evidence="1">
    <location>
        <begin position="78"/>
        <end position="98"/>
    </location>
</feature>
<feature type="transmembrane region" description="Helical" evidence="1">
    <location>
        <begin position="104"/>
        <end position="124"/>
    </location>
</feature>
<feature type="transmembrane region" description="Helical" evidence="1">
    <location>
        <begin position="175"/>
        <end position="195"/>
    </location>
</feature>
<feature type="transmembrane region" description="Helical" evidence="1">
    <location>
        <begin position="201"/>
        <end position="221"/>
    </location>
</feature>
<organism>
    <name type="scientific">Nitratiruptor sp. (strain SB155-2)</name>
    <dbReference type="NCBI Taxonomy" id="387092"/>
    <lineage>
        <taxon>Bacteria</taxon>
        <taxon>Pseudomonadati</taxon>
        <taxon>Campylobacterota</taxon>
        <taxon>Epsilonproteobacteria</taxon>
        <taxon>Nautiliales</taxon>
        <taxon>Nitratiruptoraceae</taxon>
        <taxon>Nitratiruptor</taxon>
    </lineage>
</organism>
<dbReference type="EMBL" id="AP009178">
    <property type="protein sequence ID" value="BAF69965.1"/>
    <property type="molecule type" value="Genomic_DNA"/>
</dbReference>
<dbReference type="RefSeq" id="WP_012082228.1">
    <property type="nucleotide sequence ID" value="NC_009662.1"/>
</dbReference>
<dbReference type="SMR" id="A6Q3A6"/>
<dbReference type="FunCoup" id="A6Q3A6">
    <property type="interactions" value="287"/>
</dbReference>
<dbReference type="STRING" id="387092.NIS_0853"/>
<dbReference type="KEGG" id="nis:NIS_0853"/>
<dbReference type="eggNOG" id="COG0356">
    <property type="taxonomic scope" value="Bacteria"/>
</dbReference>
<dbReference type="HOGENOM" id="CLU_041018_2_2_7"/>
<dbReference type="InParanoid" id="A6Q3A6"/>
<dbReference type="OrthoDB" id="9789241at2"/>
<dbReference type="Proteomes" id="UP000001118">
    <property type="component" value="Chromosome"/>
</dbReference>
<dbReference type="GO" id="GO:0005886">
    <property type="term" value="C:plasma membrane"/>
    <property type="evidence" value="ECO:0007669"/>
    <property type="project" value="UniProtKB-SubCell"/>
</dbReference>
<dbReference type="GO" id="GO:0045259">
    <property type="term" value="C:proton-transporting ATP synthase complex"/>
    <property type="evidence" value="ECO:0007669"/>
    <property type="project" value="UniProtKB-KW"/>
</dbReference>
<dbReference type="GO" id="GO:0046933">
    <property type="term" value="F:proton-transporting ATP synthase activity, rotational mechanism"/>
    <property type="evidence" value="ECO:0007669"/>
    <property type="project" value="UniProtKB-UniRule"/>
</dbReference>
<dbReference type="GO" id="GO:0042777">
    <property type="term" value="P:proton motive force-driven plasma membrane ATP synthesis"/>
    <property type="evidence" value="ECO:0007669"/>
    <property type="project" value="TreeGrafter"/>
</dbReference>
<dbReference type="CDD" id="cd00310">
    <property type="entry name" value="ATP-synt_Fo_a_6"/>
    <property type="match status" value="1"/>
</dbReference>
<dbReference type="FunFam" id="1.20.120.220:FF:000006">
    <property type="entry name" value="ATP synthase subunit a"/>
    <property type="match status" value="1"/>
</dbReference>
<dbReference type="Gene3D" id="1.20.120.220">
    <property type="entry name" value="ATP synthase, F0 complex, subunit A"/>
    <property type="match status" value="1"/>
</dbReference>
<dbReference type="HAMAP" id="MF_01393">
    <property type="entry name" value="ATP_synth_a_bact"/>
    <property type="match status" value="1"/>
</dbReference>
<dbReference type="InterPro" id="IPR045082">
    <property type="entry name" value="ATP_syn_F0_a_bact/chloroplast"/>
</dbReference>
<dbReference type="InterPro" id="IPR000568">
    <property type="entry name" value="ATP_synth_F0_asu"/>
</dbReference>
<dbReference type="InterPro" id="IPR023011">
    <property type="entry name" value="ATP_synth_F0_asu_AS"/>
</dbReference>
<dbReference type="InterPro" id="IPR035908">
    <property type="entry name" value="F0_ATP_A_sf"/>
</dbReference>
<dbReference type="NCBIfam" id="TIGR01131">
    <property type="entry name" value="ATP_synt_6_or_A"/>
    <property type="match status" value="1"/>
</dbReference>
<dbReference type="NCBIfam" id="NF004481">
    <property type="entry name" value="PRK05815.2-3"/>
    <property type="match status" value="1"/>
</dbReference>
<dbReference type="PANTHER" id="PTHR42823">
    <property type="entry name" value="ATP SYNTHASE SUBUNIT A, CHLOROPLASTIC"/>
    <property type="match status" value="1"/>
</dbReference>
<dbReference type="PANTHER" id="PTHR42823:SF3">
    <property type="entry name" value="ATP SYNTHASE SUBUNIT A, CHLOROPLASTIC"/>
    <property type="match status" value="1"/>
</dbReference>
<dbReference type="Pfam" id="PF00119">
    <property type="entry name" value="ATP-synt_A"/>
    <property type="match status" value="1"/>
</dbReference>
<dbReference type="PRINTS" id="PR00123">
    <property type="entry name" value="ATPASEA"/>
</dbReference>
<dbReference type="SUPFAM" id="SSF81336">
    <property type="entry name" value="F1F0 ATP synthase subunit A"/>
    <property type="match status" value="1"/>
</dbReference>
<dbReference type="PROSITE" id="PS00449">
    <property type="entry name" value="ATPASE_A"/>
    <property type="match status" value="1"/>
</dbReference>